<accession>Q5QW40</accession>
<name>AROC_IDILO</name>
<organism>
    <name type="scientific">Idiomarina loihiensis (strain ATCC BAA-735 / DSM 15497 / L2-TR)</name>
    <dbReference type="NCBI Taxonomy" id="283942"/>
    <lineage>
        <taxon>Bacteria</taxon>
        <taxon>Pseudomonadati</taxon>
        <taxon>Pseudomonadota</taxon>
        <taxon>Gammaproteobacteria</taxon>
        <taxon>Alteromonadales</taxon>
        <taxon>Idiomarinaceae</taxon>
        <taxon>Idiomarina</taxon>
    </lineage>
</organism>
<evidence type="ECO:0000255" key="1">
    <source>
        <dbReference type="HAMAP-Rule" id="MF_00300"/>
    </source>
</evidence>
<reference key="1">
    <citation type="journal article" date="2004" name="Proc. Natl. Acad. Sci. U.S.A.">
        <title>Genome sequence of the deep-sea gamma-proteobacterium Idiomarina loihiensis reveals amino acid fermentation as a source of carbon and energy.</title>
        <authorList>
            <person name="Hou S."/>
            <person name="Saw J.H."/>
            <person name="Lee K.S."/>
            <person name="Freitas T.A."/>
            <person name="Belisle C."/>
            <person name="Kawarabayasi Y."/>
            <person name="Donachie S.P."/>
            <person name="Pikina A."/>
            <person name="Galperin M.Y."/>
            <person name="Koonin E.V."/>
            <person name="Makarova K.S."/>
            <person name="Omelchenko M.V."/>
            <person name="Sorokin A."/>
            <person name="Wolf Y.I."/>
            <person name="Li Q.X."/>
            <person name="Keum Y.S."/>
            <person name="Campbell S."/>
            <person name="Denery J."/>
            <person name="Aizawa S."/>
            <person name="Shibata S."/>
            <person name="Malahoff A."/>
            <person name="Alam M."/>
        </authorList>
    </citation>
    <scope>NUCLEOTIDE SEQUENCE [LARGE SCALE GENOMIC DNA]</scope>
    <source>
        <strain>ATCC BAA-735 / DSM 15497 / L2-TR</strain>
    </source>
</reference>
<feature type="chain" id="PRO_0000140598" description="Chorismate synthase">
    <location>
        <begin position="1"/>
        <end position="362"/>
    </location>
</feature>
<feature type="binding site" evidence="1">
    <location>
        <position position="48"/>
    </location>
    <ligand>
        <name>NADP(+)</name>
        <dbReference type="ChEBI" id="CHEBI:58349"/>
    </ligand>
</feature>
<feature type="binding site" evidence="1">
    <location>
        <position position="54"/>
    </location>
    <ligand>
        <name>NADP(+)</name>
        <dbReference type="ChEBI" id="CHEBI:58349"/>
    </ligand>
</feature>
<feature type="binding site" evidence="1">
    <location>
        <begin position="125"/>
        <end position="127"/>
    </location>
    <ligand>
        <name>FMN</name>
        <dbReference type="ChEBI" id="CHEBI:58210"/>
    </ligand>
</feature>
<feature type="binding site" evidence="1">
    <location>
        <begin position="237"/>
        <end position="238"/>
    </location>
    <ligand>
        <name>FMN</name>
        <dbReference type="ChEBI" id="CHEBI:58210"/>
    </ligand>
</feature>
<feature type="binding site" evidence="1">
    <location>
        <position position="277"/>
    </location>
    <ligand>
        <name>FMN</name>
        <dbReference type="ChEBI" id="CHEBI:58210"/>
    </ligand>
</feature>
<feature type="binding site" evidence="1">
    <location>
        <begin position="292"/>
        <end position="296"/>
    </location>
    <ligand>
        <name>FMN</name>
        <dbReference type="ChEBI" id="CHEBI:58210"/>
    </ligand>
</feature>
<feature type="binding site" evidence="1">
    <location>
        <position position="318"/>
    </location>
    <ligand>
        <name>FMN</name>
        <dbReference type="ChEBI" id="CHEBI:58210"/>
    </ligand>
</feature>
<gene>
    <name evidence="1" type="primary">aroC</name>
    <name type="ordered locus">IL0892</name>
</gene>
<comment type="function">
    <text evidence="1">Catalyzes the anti-1,4-elimination of the C-3 phosphate and the C-6 proR hydrogen from 5-enolpyruvylshikimate-3-phosphate (EPSP) to yield chorismate, which is the branch point compound that serves as the starting substrate for the three terminal pathways of aromatic amino acid biosynthesis. This reaction introduces a second double bond into the aromatic ring system.</text>
</comment>
<comment type="catalytic activity">
    <reaction evidence="1">
        <text>5-O-(1-carboxyvinyl)-3-phosphoshikimate = chorismate + phosphate</text>
        <dbReference type="Rhea" id="RHEA:21020"/>
        <dbReference type="ChEBI" id="CHEBI:29748"/>
        <dbReference type="ChEBI" id="CHEBI:43474"/>
        <dbReference type="ChEBI" id="CHEBI:57701"/>
        <dbReference type="EC" id="4.2.3.5"/>
    </reaction>
</comment>
<comment type="cofactor">
    <cofactor evidence="1">
        <name>FMNH2</name>
        <dbReference type="ChEBI" id="CHEBI:57618"/>
    </cofactor>
    <text evidence="1">Reduced FMN (FMNH(2)).</text>
</comment>
<comment type="pathway">
    <text evidence="1">Metabolic intermediate biosynthesis; chorismate biosynthesis; chorismate from D-erythrose 4-phosphate and phosphoenolpyruvate: step 7/7.</text>
</comment>
<comment type="subunit">
    <text evidence="1">Homotetramer.</text>
</comment>
<comment type="similarity">
    <text evidence="1">Belongs to the chorismate synthase family.</text>
</comment>
<proteinExistence type="inferred from homology"/>
<sequence length="362" mass="39067">MPGNSFGQLFKITTFGESHGPSLGAVVDGCPAGLELTEADLQEALDRRKPGQNRYTTARREADQVKILSGVFEGVTTGTSIGLLIENTDQRSQDYSDIKDTFRPGHADYTYQHKYGVRDYRGGGRSSARETAMRVAAGAIADKLLRQQGIQVQAALTQMGDVVASNIDWQQVRENELFCGDANAVEAMQELIRQLKKEGDSIGAKIRVQATGVPPGWGEPVFDRLDADLAKALMSINAVKAVSVGDGFEVVSQRGSEHRDEMTPDGFLSNHAGGVLGGISSGQPIFADIALKPTSSIAISGRTIDRWGNEQAIVTKGRHDPCVGIRAVPIVEAMTSLVLADHWLRQRAHNLTAQTETPDISR</sequence>
<protein>
    <recommendedName>
        <fullName evidence="1">Chorismate synthase</fullName>
        <shortName evidence="1">CS</shortName>
        <ecNumber evidence="1">4.2.3.5</ecNumber>
    </recommendedName>
    <alternativeName>
        <fullName evidence="1">5-enolpyruvylshikimate-3-phosphate phospholyase</fullName>
    </alternativeName>
</protein>
<keyword id="KW-0028">Amino-acid biosynthesis</keyword>
<keyword id="KW-0057">Aromatic amino acid biosynthesis</keyword>
<keyword id="KW-0274">FAD</keyword>
<keyword id="KW-0285">Flavoprotein</keyword>
<keyword id="KW-0288">FMN</keyword>
<keyword id="KW-0456">Lyase</keyword>
<keyword id="KW-0521">NADP</keyword>
<keyword id="KW-1185">Reference proteome</keyword>
<dbReference type="EC" id="4.2.3.5" evidence="1"/>
<dbReference type="EMBL" id="AE017340">
    <property type="protein sequence ID" value="AAV81732.1"/>
    <property type="molecule type" value="Genomic_DNA"/>
</dbReference>
<dbReference type="RefSeq" id="WP_011234143.1">
    <property type="nucleotide sequence ID" value="NC_006512.1"/>
</dbReference>
<dbReference type="SMR" id="Q5QW40"/>
<dbReference type="STRING" id="283942.IL0892"/>
<dbReference type="GeneID" id="41336047"/>
<dbReference type="KEGG" id="ilo:IL0892"/>
<dbReference type="eggNOG" id="COG0082">
    <property type="taxonomic scope" value="Bacteria"/>
</dbReference>
<dbReference type="HOGENOM" id="CLU_034547_0_2_6"/>
<dbReference type="OrthoDB" id="9771806at2"/>
<dbReference type="UniPathway" id="UPA00053">
    <property type="reaction ID" value="UER00090"/>
</dbReference>
<dbReference type="Proteomes" id="UP000001171">
    <property type="component" value="Chromosome"/>
</dbReference>
<dbReference type="GO" id="GO:0005829">
    <property type="term" value="C:cytosol"/>
    <property type="evidence" value="ECO:0007669"/>
    <property type="project" value="TreeGrafter"/>
</dbReference>
<dbReference type="GO" id="GO:0004107">
    <property type="term" value="F:chorismate synthase activity"/>
    <property type="evidence" value="ECO:0007669"/>
    <property type="project" value="UniProtKB-UniRule"/>
</dbReference>
<dbReference type="GO" id="GO:0010181">
    <property type="term" value="F:FMN binding"/>
    <property type="evidence" value="ECO:0007669"/>
    <property type="project" value="TreeGrafter"/>
</dbReference>
<dbReference type="GO" id="GO:0008652">
    <property type="term" value="P:amino acid biosynthetic process"/>
    <property type="evidence" value="ECO:0007669"/>
    <property type="project" value="UniProtKB-KW"/>
</dbReference>
<dbReference type="GO" id="GO:0009073">
    <property type="term" value="P:aromatic amino acid family biosynthetic process"/>
    <property type="evidence" value="ECO:0007669"/>
    <property type="project" value="UniProtKB-KW"/>
</dbReference>
<dbReference type="GO" id="GO:0009423">
    <property type="term" value="P:chorismate biosynthetic process"/>
    <property type="evidence" value="ECO:0007669"/>
    <property type="project" value="UniProtKB-UniRule"/>
</dbReference>
<dbReference type="CDD" id="cd07304">
    <property type="entry name" value="Chorismate_synthase"/>
    <property type="match status" value="1"/>
</dbReference>
<dbReference type="FunFam" id="3.60.150.10:FF:000001">
    <property type="entry name" value="Chorismate synthase"/>
    <property type="match status" value="1"/>
</dbReference>
<dbReference type="Gene3D" id="3.60.150.10">
    <property type="entry name" value="Chorismate synthase AroC"/>
    <property type="match status" value="1"/>
</dbReference>
<dbReference type="HAMAP" id="MF_00300">
    <property type="entry name" value="Chorismate_synth"/>
    <property type="match status" value="1"/>
</dbReference>
<dbReference type="InterPro" id="IPR000453">
    <property type="entry name" value="Chorismate_synth"/>
</dbReference>
<dbReference type="InterPro" id="IPR035904">
    <property type="entry name" value="Chorismate_synth_AroC_sf"/>
</dbReference>
<dbReference type="InterPro" id="IPR020541">
    <property type="entry name" value="Chorismate_synthase_CS"/>
</dbReference>
<dbReference type="NCBIfam" id="TIGR00033">
    <property type="entry name" value="aroC"/>
    <property type="match status" value="1"/>
</dbReference>
<dbReference type="NCBIfam" id="NF003793">
    <property type="entry name" value="PRK05382.1"/>
    <property type="match status" value="1"/>
</dbReference>
<dbReference type="PANTHER" id="PTHR21085">
    <property type="entry name" value="CHORISMATE SYNTHASE"/>
    <property type="match status" value="1"/>
</dbReference>
<dbReference type="PANTHER" id="PTHR21085:SF0">
    <property type="entry name" value="CHORISMATE SYNTHASE"/>
    <property type="match status" value="1"/>
</dbReference>
<dbReference type="Pfam" id="PF01264">
    <property type="entry name" value="Chorismate_synt"/>
    <property type="match status" value="1"/>
</dbReference>
<dbReference type="PIRSF" id="PIRSF001456">
    <property type="entry name" value="Chorismate_synth"/>
    <property type="match status" value="1"/>
</dbReference>
<dbReference type="SUPFAM" id="SSF103263">
    <property type="entry name" value="Chorismate synthase, AroC"/>
    <property type="match status" value="1"/>
</dbReference>
<dbReference type="PROSITE" id="PS00787">
    <property type="entry name" value="CHORISMATE_SYNTHASE_1"/>
    <property type="match status" value="1"/>
</dbReference>
<dbReference type="PROSITE" id="PS00788">
    <property type="entry name" value="CHORISMATE_SYNTHASE_2"/>
    <property type="match status" value="1"/>
</dbReference>
<dbReference type="PROSITE" id="PS00789">
    <property type="entry name" value="CHORISMATE_SYNTHASE_3"/>
    <property type="match status" value="1"/>
</dbReference>